<feature type="transit peptide" description="Mitochondrion" evidence="1">
    <location>
        <begin position="1"/>
        <end position="26"/>
    </location>
</feature>
<feature type="chain" id="PRO_0000030812" description="ATP-dependent RNA helicase MSS116, mitochondrial">
    <location>
        <begin position="27"/>
        <end position="664"/>
    </location>
</feature>
<feature type="domain" description="Helicase ATP-binding" evidence="2">
    <location>
        <begin position="139"/>
        <end position="326"/>
    </location>
</feature>
<feature type="domain" description="Helicase C-terminal" evidence="3">
    <location>
        <begin position="355"/>
        <end position="512"/>
    </location>
</feature>
<feature type="region of interest" description="Disordered" evidence="4">
    <location>
        <begin position="42"/>
        <end position="79"/>
    </location>
</feature>
<feature type="region of interest" description="Disordered" evidence="4">
    <location>
        <begin position="602"/>
        <end position="664"/>
    </location>
</feature>
<feature type="short sequence motif" description="Q motif">
    <location>
        <begin position="106"/>
        <end position="134"/>
    </location>
</feature>
<feature type="short sequence motif" description="DEAD box">
    <location>
        <begin position="267"/>
        <end position="270"/>
    </location>
</feature>
<feature type="compositionally biased region" description="Low complexity" evidence="4">
    <location>
        <begin position="48"/>
        <end position="68"/>
    </location>
</feature>
<feature type="compositionally biased region" description="Basic and acidic residues" evidence="4">
    <location>
        <begin position="628"/>
        <end position="638"/>
    </location>
</feature>
<feature type="compositionally biased region" description="Low complexity" evidence="4">
    <location>
        <begin position="639"/>
        <end position="649"/>
    </location>
</feature>
<feature type="compositionally biased region" description="Polar residues" evidence="4">
    <location>
        <begin position="653"/>
        <end position="664"/>
    </location>
</feature>
<feature type="binding site" evidence="2">
    <location>
        <begin position="152"/>
        <end position="159"/>
    </location>
    <ligand>
        <name>ATP</name>
        <dbReference type="ChEBI" id="CHEBI:30616"/>
    </ligand>
</feature>
<feature type="strand" evidence="13">
    <location>
        <begin position="89"/>
        <end position="93"/>
    </location>
</feature>
<feature type="helix" evidence="13">
    <location>
        <begin position="104"/>
        <end position="109"/>
    </location>
</feature>
<feature type="helix" evidence="13">
    <location>
        <begin position="115"/>
        <end position="122"/>
    </location>
</feature>
<feature type="turn" evidence="15">
    <location>
        <begin position="123"/>
        <end position="125"/>
    </location>
</feature>
<feature type="helix" evidence="13">
    <location>
        <begin position="131"/>
        <end position="141"/>
    </location>
</feature>
<feature type="strand" evidence="13">
    <location>
        <begin position="142"/>
        <end position="151"/>
    </location>
</feature>
<feature type="helix" evidence="13">
    <location>
        <begin position="158"/>
        <end position="172"/>
    </location>
</feature>
<feature type="turn" evidence="13">
    <location>
        <begin position="173"/>
        <end position="175"/>
    </location>
</feature>
<feature type="strand" evidence="13">
    <location>
        <begin position="183"/>
        <end position="186"/>
    </location>
</feature>
<feature type="helix" evidence="13">
    <location>
        <begin position="190"/>
        <end position="206"/>
    </location>
</feature>
<feature type="helix" evidence="13">
    <location>
        <begin position="208"/>
        <end position="210"/>
    </location>
</feature>
<feature type="strand" evidence="13">
    <location>
        <begin position="215"/>
        <end position="218"/>
    </location>
</feature>
<feature type="helix" evidence="13">
    <location>
        <begin position="224"/>
        <end position="234"/>
    </location>
</feature>
<feature type="strand" evidence="13">
    <location>
        <begin position="237"/>
        <end position="241"/>
    </location>
</feature>
<feature type="helix" evidence="13">
    <location>
        <begin position="243"/>
        <end position="257"/>
    </location>
</feature>
<feature type="strand" evidence="16">
    <location>
        <begin position="258"/>
        <end position="260"/>
    </location>
</feature>
<feature type="strand" evidence="13">
    <location>
        <begin position="263"/>
        <end position="267"/>
    </location>
</feature>
<feature type="helix" evidence="13">
    <location>
        <begin position="269"/>
        <end position="272"/>
    </location>
</feature>
<feature type="turn" evidence="13">
    <location>
        <begin position="275"/>
        <end position="277"/>
    </location>
</feature>
<feature type="helix" evidence="13">
    <location>
        <begin position="278"/>
        <end position="291"/>
    </location>
</feature>
<feature type="strand" evidence="13">
    <location>
        <begin position="300"/>
        <end position="307"/>
    </location>
</feature>
<feature type="helix" evidence="13">
    <location>
        <begin position="311"/>
        <end position="315"/>
    </location>
</feature>
<feature type="turn" evidence="13">
    <location>
        <begin position="316"/>
        <end position="319"/>
    </location>
</feature>
<feature type="strand" evidence="13">
    <location>
        <begin position="322"/>
        <end position="331"/>
    </location>
</feature>
<feature type="strand" evidence="13">
    <location>
        <begin position="333"/>
        <end position="335"/>
    </location>
</feature>
<feature type="strand" evidence="13">
    <location>
        <begin position="342"/>
        <end position="351"/>
    </location>
</feature>
<feature type="helix" evidence="13">
    <location>
        <begin position="354"/>
        <end position="369"/>
    </location>
</feature>
<feature type="turn" evidence="13">
    <location>
        <begin position="370"/>
        <end position="372"/>
    </location>
</feature>
<feature type="strand" evidence="13">
    <location>
        <begin position="375"/>
        <end position="379"/>
    </location>
</feature>
<feature type="helix" evidence="13">
    <location>
        <begin position="383"/>
        <end position="397"/>
    </location>
</feature>
<feature type="turn" evidence="13">
    <location>
        <begin position="398"/>
        <end position="400"/>
    </location>
</feature>
<feature type="strand" evidence="13">
    <location>
        <begin position="403"/>
        <end position="407"/>
    </location>
</feature>
<feature type="helix" evidence="13">
    <location>
        <begin position="412"/>
        <end position="424"/>
    </location>
</feature>
<feature type="strand" evidence="13">
    <location>
        <begin position="426"/>
        <end position="432"/>
    </location>
</feature>
<feature type="helix" evidence="13">
    <location>
        <begin position="434"/>
        <end position="436"/>
    </location>
</feature>
<feature type="strand" evidence="17">
    <location>
        <begin position="437"/>
        <end position="439"/>
    </location>
</feature>
<feature type="strand" evidence="13">
    <location>
        <begin position="447"/>
        <end position="452"/>
    </location>
</feature>
<feature type="strand" evidence="16">
    <location>
        <begin position="455"/>
        <end position="457"/>
    </location>
</feature>
<feature type="helix" evidence="13">
    <location>
        <begin position="459"/>
        <end position="464"/>
    </location>
</feature>
<feature type="helix" evidence="14">
    <location>
        <begin position="469"/>
        <end position="471"/>
    </location>
</feature>
<feature type="strand" evidence="13">
    <location>
        <begin position="474"/>
        <end position="481"/>
    </location>
</feature>
<feature type="helix" evidence="13">
    <location>
        <begin position="482"/>
        <end position="484"/>
    </location>
</feature>
<feature type="helix" evidence="13">
    <location>
        <begin position="485"/>
        <end position="495"/>
    </location>
</feature>
<feature type="strand" evidence="13">
    <location>
        <begin position="501"/>
        <end position="505"/>
    </location>
</feature>
<feature type="helix" evidence="13">
    <location>
        <begin position="509"/>
        <end position="518"/>
    </location>
</feature>
<feature type="helix" evidence="13">
    <location>
        <begin position="523"/>
        <end position="539"/>
    </location>
</feature>
<feature type="helix" evidence="13">
    <location>
        <begin position="541"/>
        <end position="544"/>
    </location>
</feature>
<feature type="helix" evidence="13">
    <location>
        <begin position="548"/>
        <end position="556"/>
    </location>
</feature>
<feature type="helix" evidence="13">
    <location>
        <begin position="558"/>
        <end position="562"/>
    </location>
</feature>
<feature type="strand" evidence="13">
    <location>
        <begin position="570"/>
        <end position="572"/>
    </location>
</feature>
<feature type="helix" evidence="13">
    <location>
        <begin position="574"/>
        <end position="580"/>
    </location>
</feature>
<feature type="strand" evidence="15">
    <location>
        <begin position="583"/>
        <end position="585"/>
    </location>
</feature>
<feature type="helix" evidence="13">
    <location>
        <begin position="586"/>
        <end position="591"/>
    </location>
</feature>
<feature type="strand" evidence="13">
    <location>
        <begin position="592"/>
        <end position="594"/>
    </location>
</feature>
<dbReference type="EC" id="3.6.4.13"/>
<dbReference type="EMBL" id="Z48784">
    <property type="protein sequence ID" value="CAA88707.1"/>
    <property type="molecule type" value="Genomic_DNA"/>
</dbReference>
<dbReference type="EMBL" id="BK006938">
    <property type="protein sequence ID" value="DAA12036.1"/>
    <property type="molecule type" value="Genomic_DNA"/>
</dbReference>
<dbReference type="PIR" id="S02116">
    <property type="entry name" value="S02116"/>
</dbReference>
<dbReference type="RefSeq" id="NP_010480.1">
    <property type="nucleotide sequence ID" value="NM_001180502.1"/>
</dbReference>
<dbReference type="PDB" id="3I5X">
    <property type="method" value="X-ray"/>
    <property type="resolution" value="1.90 A"/>
    <property type="chains" value="A=37-597"/>
</dbReference>
<dbReference type="PDB" id="3I5Y">
    <property type="method" value="X-ray"/>
    <property type="resolution" value="2.49 A"/>
    <property type="chains" value="A=37-597"/>
</dbReference>
<dbReference type="PDB" id="3I61">
    <property type="method" value="X-ray"/>
    <property type="resolution" value="2.10 A"/>
    <property type="chains" value="A=37-597"/>
</dbReference>
<dbReference type="PDB" id="3I62">
    <property type="method" value="X-ray"/>
    <property type="resolution" value="1.95 A"/>
    <property type="chains" value="A=37-597"/>
</dbReference>
<dbReference type="PDB" id="3SQW">
    <property type="method" value="X-ray"/>
    <property type="resolution" value="1.91 A"/>
    <property type="chains" value="A=88-664"/>
</dbReference>
<dbReference type="PDB" id="3SQX">
    <property type="method" value="X-ray"/>
    <property type="resolution" value="2.11 A"/>
    <property type="chains" value="A=88-597"/>
</dbReference>
<dbReference type="PDB" id="4DB2">
    <property type="method" value="X-ray"/>
    <property type="resolution" value="3.16 A"/>
    <property type="chains" value="A/B/C/D=342-596"/>
</dbReference>
<dbReference type="PDB" id="4DB4">
    <property type="method" value="X-ray"/>
    <property type="resolution" value="3.60 A"/>
    <property type="chains" value="A/B=342-596"/>
</dbReference>
<dbReference type="PDB" id="4TYN">
    <property type="method" value="X-ray"/>
    <property type="resolution" value="2.96 A"/>
    <property type="chains" value="A=88-596"/>
</dbReference>
<dbReference type="PDB" id="4TYW">
    <property type="method" value="X-ray"/>
    <property type="resolution" value="2.20 A"/>
    <property type="chains" value="A=88-595"/>
</dbReference>
<dbReference type="PDB" id="4TYY">
    <property type="method" value="X-ray"/>
    <property type="resolution" value="2.74 A"/>
    <property type="chains" value="A=88-596"/>
</dbReference>
<dbReference type="PDB" id="4TZ0">
    <property type="method" value="X-ray"/>
    <property type="resolution" value="2.35 A"/>
    <property type="chains" value="A=88-596"/>
</dbReference>
<dbReference type="PDB" id="4TZ6">
    <property type="method" value="X-ray"/>
    <property type="resolution" value="3.21 A"/>
    <property type="chains" value="A=88-596"/>
</dbReference>
<dbReference type="PDBsum" id="3I5X"/>
<dbReference type="PDBsum" id="3I5Y"/>
<dbReference type="PDBsum" id="3I61"/>
<dbReference type="PDBsum" id="3I62"/>
<dbReference type="PDBsum" id="3SQW"/>
<dbReference type="PDBsum" id="3SQX"/>
<dbReference type="PDBsum" id="4DB2"/>
<dbReference type="PDBsum" id="4DB4"/>
<dbReference type="PDBsum" id="4TYN"/>
<dbReference type="PDBsum" id="4TYW"/>
<dbReference type="PDBsum" id="4TYY"/>
<dbReference type="PDBsum" id="4TZ0"/>
<dbReference type="PDBsum" id="4TZ6"/>
<dbReference type="SMR" id="P15424"/>
<dbReference type="BioGRID" id="32246">
    <property type="interactions" value="195"/>
</dbReference>
<dbReference type="DIP" id="DIP-5368N"/>
<dbReference type="FunCoup" id="P15424">
    <property type="interactions" value="289"/>
</dbReference>
<dbReference type="IntAct" id="P15424">
    <property type="interactions" value="87"/>
</dbReference>
<dbReference type="MINT" id="P15424"/>
<dbReference type="STRING" id="4932.YDR194C"/>
<dbReference type="iPTMnet" id="P15424"/>
<dbReference type="PaxDb" id="4932-YDR194C"/>
<dbReference type="PeptideAtlas" id="P15424"/>
<dbReference type="EnsemblFungi" id="YDR194C_mRNA">
    <property type="protein sequence ID" value="YDR194C"/>
    <property type="gene ID" value="YDR194C"/>
</dbReference>
<dbReference type="GeneID" id="851775"/>
<dbReference type="KEGG" id="sce:YDR194C"/>
<dbReference type="AGR" id="SGD:S000002602"/>
<dbReference type="SGD" id="S000002602">
    <property type="gene designation" value="MSS116"/>
</dbReference>
<dbReference type="VEuPathDB" id="FungiDB:YDR194C"/>
<dbReference type="eggNOG" id="KOG0342">
    <property type="taxonomic scope" value="Eukaryota"/>
</dbReference>
<dbReference type="HOGENOM" id="CLU_003041_26_6_1"/>
<dbReference type="InParanoid" id="P15424"/>
<dbReference type="OMA" id="AHEKIDQ"/>
<dbReference type="OrthoDB" id="193716at2759"/>
<dbReference type="BioCyc" id="YEAST:G3O-29781-MONOMER"/>
<dbReference type="BioGRID-ORCS" id="851775">
    <property type="hits" value="0 hits in 10 CRISPR screens"/>
</dbReference>
<dbReference type="EvolutionaryTrace" id="P15424"/>
<dbReference type="PRO" id="PR:P15424"/>
<dbReference type="Proteomes" id="UP000002311">
    <property type="component" value="Chromosome IV"/>
</dbReference>
<dbReference type="RNAct" id="P15424">
    <property type="molecule type" value="protein"/>
</dbReference>
<dbReference type="GO" id="GO:0005759">
    <property type="term" value="C:mitochondrial matrix"/>
    <property type="evidence" value="ECO:0000315"/>
    <property type="project" value="SGD"/>
</dbReference>
<dbReference type="GO" id="GO:0005761">
    <property type="term" value="C:mitochondrial ribosome"/>
    <property type="evidence" value="ECO:0000314"/>
    <property type="project" value="SGD"/>
</dbReference>
<dbReference type="GO" id="GO:0005739">
    <property type="term" value="C:mitochondrion"/>
    <property type="evidence" value="ECO:0007005"/>
    <property type="project" value="SGD"/>
</dbReference>
<dbReference type="GO" id="GO:0005524">
    <property type="term" value="F:ATP binding"/>
    <property type="evidence" value="ECO:0007669"/>
    <property type="project" value="UniProtKB-KW"/>
</dbReference>
<dbReference type="GO" id="GO:0016887">
    <property type="term" value="F:ATP hydrolysis activity"/>
    <property type="evidence" value="ECO:0007669"/>
    <property type="project" value="RHEA"/>
</dbReference>
<dbReference type="GO" id="GO:0051880">
    <property type="term" value="F:G-quadruplex DNA binding"/>
    <property type="evidence" value="ECO:0000314"/>
    <property type="project" value="SGD"/>
</dbReference>
<dbReference type="GO" id="GO:0002151">
    <property type="term" value="F:G-quadruplex RNA binding"/>
    <property type="evidence" value="ECO:0000314"/>
    <property type="project" value="SGD"/>
</dbReference>
<dbReference type="GO" id="GO:0003729">
    <property type="term" value="F:mRNA binding"/>
    <property type="evidence" value="ECO:0007005"/>
    <property type="project" value="SGD"/>
</dbReference>
<dbReference type="GO" id="GO:0003723">
    <property type="term" value="F:RNA binding"/>
    <property type="evidence" value="ECO:0000314"/>
    <property type="project" value="SGD"/>
</dbReference>
<dbReference type="GO" id="GO:0003724">
    <property type="term" value="F:RNA helicase activity"/>
    <property type="evidence" value="ECO:0000314"/>
    <property type="project" value="SGD"/>
</dbReference>
<dbReference type="GO" id="GO:0033592">
    <property type="term" value="F:RNA strand annealing activity"/>
    <property type="evidence" value="ECO:0000314"/>
    <property type="project" value="SGD"/>
</dbReference>
<dbReference type="GO" id="GO:0000372">
    <property type="term" value="P:Group I intron splicing"/>
    <property type="evidence" value="ECO:0000315"/>
    <property type="project" value="SGD"/>
</dbReference>
<dbReference type="GO" id="GO:0000373">
    <property type="term" value="P:Group II intron splicing"/>
    <property type="evidence" value="ECO:0000314"/>
    <property type="project" value="SGD"/>
</dbReference>
<dbReference type="GO" id="GO:0000963">
    <property type="term" value="P:mitochondrial RNA processing"/>
    <property type="evidence" value="ECO:0000315"/>
    <property type="project" value="SGD"/>
</dbReference>
<dbReference type="GO" id="GO:0070125">
    <property type="term" value="P:mitochondrial translational elongation"/>
    <property type="evidence" value="ECO:0000314"/>
    <property type="project" value="SGD"/>
</dbReference>
<dbReference type="GO" id="GO:0070124">
    <property type="term" value="P:mitochondrial translational initiation"/>
    <property type="evidence" value="ECO:0000314"/>
    <property type="project" value="SGD"/>
</dbReference>
<dbReference type="GO" id="GO:0006397">
    <property type="term" value="P:mRNA processing"/>
    <property type="evidence" value="ECO:0007669"/>
    <property type="project" value="UniProtKB-KW"/>
</dbReference>
<dbReference type="GO" id="GO:0006417">
    <property type="term" value="P:regulation of translation"/>
    <property type="evidence" value="ECO:0007669"/>
    <property type="project" value="UniProtKB-KW"/>
</dbReference>
<dbReference type="GO" id="GO:0034337">
    <property type="term" value="P:RNA folding"/>
    <property type="evidence" value="ECO:0000315"/>
    <property type="project" value="SGD"/>
</dbReference>
<dbReference type="GO" id="GO:0006392">
    <property type="term" value="P:transcription elongation by mitochondrial RNA polymerase"/>
    <property type="evidence" value="ECO:0000314"/>
    <property type="project" value="SGD"/>
</dbReference>
<dbReference type="CDD" id="cd17964">
    <property type="entry name" value="DEADc_MSS116"/>
    <property type="match status" value="1"/>
</dbReference>
<dbReference type="CDD" id="cd18787">
    <property type="entry name" value="SF2_C_DEAD"/>
    <property type="match status" value="1"/>
</dbReference>
<dbReference type="FunFam" id="3.40.50.300:FF:002331">
    <property type="entry name" value="ATP-dependent RNA helicase MSS116, mitochondrial"/>
    <property type="match status" value="1"/>
</dbReference>
<dbReference type="FunFam" id="3.40.50.300:FF:002419">
    <property type="entry name" value="ATP-dependent RNA helicase MSS116, mitochondrial"/>
    <property type="match status" value="1"/>
</dbReference>
<dbReference type="Gene3D" id="3.40.50.300">
    <property type="entry name" value="P-loop containing nucleotide triphosphate hydrolases"/>
    <property type="match status" value="2"/>
</dbReference>
<dbReference type="InterPro" id="IPR011545">
    <property type="entry name" value="DEAD/DEAH_box_helicase_dom"/>
</dbReference>
<dbReference type="InterPro" id="IPR014001">
    <property type="entry name" value="Helicase_ATP-bd"/>
</dbReference>
<dbReference type="InterPro" id="IPR001650">
    <property type="entry name" value="Helicase_C-like"/>
</dbReference>
<dbReference type="InterPro" id="IPR027417">
    <property type="entry name" value="P-loop_NTPase"/>
</dbReference>
<dbReference type="InterPro" id="IPR000629">
    <property type="entry name" value="RNA-helicase_DEAD-box_CS"/>
</dbReference>
<dbReference type="PANTHER" id="PTHR24031">
    <property type="entry name" value="RNA HELICASE"/>
    <property type="match status" value="1"/>
</dbReference>
<dbReference type="Pfam" id="PF00270">
    <property type="entry name" value="DEAD"/>
    <property type="match status" value="1"/>
</dbReference>
<dbReference type="Pfam" id="PF00271">
    <property type="entry name" value="Helicase_C"/>
    <property type="match status" value="1"/>
</dbReference>
<dbReference type="SMART" id="SM00487">
    <property type="entry name" value="DEXDc"/>
    <property type="match status" value="1"/>
</dbReference>
<dbReference type="SMART" id="SM00490">
    <property type="entry name" value="HELICc"/>
    <property type="match status" value="1"/>
</dbReference>
<dbReference type="SUPFAM" id="SSF52540">
    <property type="entry name" value="P-loop containing nucleoside triphosphate hydrolases"/>
    <property type="match status" value="1"/>
</dbReference>
<dbReference type="PROSITE" id="PS00039">
    <property type="entry name" value="DEAD_ATP_HELICASE"/>
    <property type="match status" value="1"/>
</dbReference>
<dbReference type="PROSITE" id="PS51192">
    <property type="entry name" value="HELICASE_ATP_BIND_1"/>
    <property type="match status" value="1"/>
</dbReference>
<dbReference type="PROSITE" id="PS51194">
    <property type="entry name" value="HELICASE_CTER"/>
    <property type="match status" value="1"/>
</dbReference>
<dbReference type="PROSITE" id="PS51195">
    <property type="entry name" value="Q_MOTIF"/>
    <property type="match status" value="1"/>
</dbReference>
<evidence type="ECO:0000255" key="1"/>
<evidence type="ECO:0000255" key="2">
    <source>
        <dbReference type="PROSITE-ProRule" id="PRU00541"/>
    </source>
</evidence>
<evidence type="ECO:0000255" key="3">
    <source>
        <dbReference type="PROSITE-ProRule" id="PRU00542"/>
    </source>
</evidence>
<evidence type="ECO:0000256" key="4">
    <source>
        <dbReference type="SAM" id="MobiDB-lite"/>
    </source>
</evidence>
<evidence type="ECO:0000269" key="5">
    <source>
    </source>
</evidence>
<evidence type="ECO:0000269" key="6">
    <source>
    </source>
</evidence>
<evidence type="ECO:0000269" key="7">
    <source>
    </source>
</evidence>
<evidence type="ECO:0000269" key="8">
    <source>
    </source>
</evidence>
<evidence type="ECO:0000269" key="9">
    <source>
    </source>
</evidence>
<evidence type="ECO:0000269" key="10">
    <source>
    </source>
</evidence>
<evidence type="ECO:0000269" key="11">
    <source>
    </source>
</evidence>
<evidence type="ECO:0000305" key="12"/>
<evidence type="ECO:0007829" key="13">
    <source>
        <dbReference type="PDB" id="3I5X"/>
    </source>
</evidence>
<evidence type="ECO:0007829" key="14">
    <source>
        <dbReference type="PDB" id="4TYN"/>
    </source>
</evidence>
<evidence type="ECO:0007829" key="15">
    <source>
        <dbReference type="PDB" id="4TYW"/>
    </source>
</evidence>
<evidence type="ECO:0007829" key="16">
    <source>
        <dbReference type="PDB" id="4TYY"/>
    </source>
</evidence>
<evidence type="ECO:0007829" key="17">
    <source>
        <dbReference type="PDB" id="4TZ0"/>
    </source>
</evidence>
<reference key="1">
    <citation type="journal article" date="1989" name="Nature">
        <title>Mitochondrial splicing requires a protein from a novel helicase family.</title>
        <authorList>
            <person name="Seraphin B."/>
            <person name="Simon M."/>
            <person name="Boulet A."/>
            <person name="Faye G."/>
        </authorList>
    </citation>
    <scope>NUCLEOTIDE SEQUENCE [GENOMIC DNA]</scope>
    <scope>FUNCTION</scope>
</reference>
<reference key="2">
    <citation type="journal article" date="1997" name="Nature">
        <title>The nucleotide sequence of Saccharomyces cerevisiae chromosome IV.</title>
        <authorList>
            <person name="Jacq C."/>
            <person name="Alt-Moerbe J."/>
            <person name="Andre B."/>
            <person name="Arnold W."/>
            <person name="Bahr A."/>
            <person name="Ballesta J.P.G."/>
            <person name="Bargues M."/>
            <person name="Baron L."/>
            <person name="Becker A."/>
            <person name="Biteau N."/>
            <person name="Bloecker H."/>
            <person name="Blugeon C."/>
            <person name="Boskovic J."/>
            <person name="Brandt P."/>
            <person name="Brueckner M."/>
            <person name="Buitrago M.J."/>
            <person name="Coster F."/>
            <person name="Delaveau T."/>
            <person name="del Rey F."/>
            <person name="Dujon B."/>
            <person name="Eide L.G."/>
            <person name="Garcia-Cantalejo J.M."/>
            <person name="Goffeau A."/>
            <person name="Gomez-Peris A."/>
            <person name="Granotier C."/>
            <person name="Hanemann V."/>
            <person name="Hankeln T."/>
            <person name="Hoheisel J.D."/>
            <person name="Jaeger W."/>
            <person name="Jimenez A."/>
            <person name="Jonniaux J.-L."/>
            <person name="Kraemer C."/>
            <person name="Kuester H."/>
            <person name="Laamanen P."/>
            <person name="Legros Y."/>
            <person name="Louis E.J."/>
            <person name="Moeller-Rieker S."/>
            <person name="Monnet A."/>
            <person name="Moro M."/>
            <person name="Mueller-Auer S."/>
            <person name="Nussbaumer B."/>
            <person name="Paricio N."/>
            <person name="Paulin L."/>
            <person name="Perea J."/>
            <person name="Perez-Alonso M."/>
            <person name="Perez-Ortin J.E."/>
            <person name="Pohl T.M."/>
            <person name="Prydz H."/>
            <person name="Purnelle B."/>
            <person name="Rasmussen S.W."/>
            <person name="Remacha M.A."/>
            <person name="Revuelta J.L."/>
            <person name="Rieger M."/>
            <person name="Salom D."/>
            <person name="Saluz H.P."/>
            <person name="Saiz J.E."/>
            <person name="Saren A.-M."/>
            <person name="Schaefer M."/>
            <person name="Scharfe M."/>
            <person name="Schmidt E.R."/>
            <person name="Schneider C."/>
            <person name="Scholler P."/>
            <person name="Schwarz S."/>
            <person name="Soler-Mira A."/>
            <person name="Urrestarazu L.A."/>
            <person name="Verhasselt P."/>
            <person name="Vissers S."/>
            <person name="Voet M."/>
            <person name="Volckaert G."/>
            <person name="Wagner G."/>
            <person name="Wambutt R."/>
            <person name="Wedler E."/>
            <person name="Wedler H."/>
            <person name="Woelfl S."/>
            <person name="Harris D.E."/>
            <person name="Bowman S."/>
            <person name="Brown D."/>
            <person name="Churcher C.M."/>
            <person name="Connor R."/>
            <person name="Dedman K."/>
            <person name="Gentles S."/>
            <person name="Hamlin N."/>
            <person name="Hunt S."/>
            <person name="Jones L."/>
            <person name="McDonald S."/>
            <person name="Murphy L.D."/>
            <person name="Niblett D."/>
            <person name="Odell C."/>
            <person name="Oliver K."/>
            <person name="Rajandream M.A."/>
            <person name="Richards C."/>
            <person name="Shore L."/>
            <person name="Walsh S.V."/>
            <person name="Barrell B.G."/>
            <person name="Dietrich F.S."/>
            <person name="Mulligan J.T."/>
            <person name="Allen E."/>
            <person name="Araujo R."/>
            <person name="Aviles E."/>
            <person name="Berno A."/>
            <person name="Carpenter J."/>
            <person name="Chen E."/>
            <person name="Cherry J.M."/>
            <person name="Chung E."/>
            <person name="Duncan M."/>
            <person name="Hunicke-Smith S."/>
            <person name="Hyman R.W."/>
            <person name="Komp C."/>
            <person name="Lashkari D."/>
            <person name="Lew H."/>
            <person name="Lin D."/>
            <person name="Mosedale D."/>
            <person name="Nakahara K."/>
            <person name="Namath A."/>
            <person name="Oefner P."/>
            <person name="Oh C."/>
            <person name="Petel F.X."/>
            <person name="Roberts D."/>
            <person name="Schramm S."/>
            <person name="Schroeder M."/>
            <person name="Shogren T."/>
            <person name="Shroff N."/>
            <person name="Winant A."/>
            <person name="Yelton M.A."/>
            <person name="Botstein D."/>
            <person name="Davis R.W."/>
            <person name="Johnston M."/>
            <person name="Andrews S."/>
            <person name="Brinkman R."/>
            <person name="Cooper J."/>
            <person name="Ding H."/>
            <person name="Du Z."/>
            <person name="Favello A."/>
            <person name="Fulton L."/>
            <person name="Gattung S."/>
            <person name="Greco T."/>
            <person name="Hallsworth K."/>
            <person name="Hawkins J."/>
            <person name="Hillier L.W."/>
            <person name="Jier M."/>
            <person name="Johnson D."/>
            <person name="Johnston L."/>
            <person name="Kirsten J."/>
            <person name="Kucaba T."/>
            <person name="Langston Y."/>
            <person name="Latreille P."/>
            <person name="Le T."/>
            <person name="Mardis E."/>
            <person name="Menezes S."/>
            <person name="Miller N."/>
            <person name="Nhan M."/>
            <person name="Pauley A."/>
            <person name="Peluso D."/>
            <person name="Rifkin L."/>
            <person name="Riles L."/>
            <person name="Taich A."/>
            <person name="Trevaskis E."/>
            <person name="Vignati D."/>
            <person name="Wilcox L."/>
            <person name="Wohldman P."/>
            <person name="Vaudin M."/>
            <person name="Wilson R."/>
            <person name="Waterston R."/>
            <person name="Albermann K."/>
            <person name="Hani J."/>
            <person name="Heumann K."/>
            <person name="Kleine K."/>
            <person name="Mewes H.-W."/>
            <person name="Zollner A."/>
            <person name="Zaccaria P."/>
        </authorList>
    </citation>
    <scope>NUCLEOTIDE SEQUENCE [LARGE SCALE GENOMIC DNA]</scope>
    <source>
        <strain>ATCC 204508 / S288c</strain>
    </source>
</reference>
<reference key="3">
    <citation type="journal article" date="2014" name="G3 (Bethesda)">
        <title>The reference genome sequence of Saccharomyces cerevisiae: Then and now.</title>
        <authorList>
            <person name="Engel S.R."/>
            <person name="Dietrich F.S."/>
            <person name="Fisk D.G."/>
            <person name="Binkley G."/>
            <person name="Balakrishnan R."/>
            <person name="Costanzo M.C."/>
            <person name="Dwight S.S."/>
            <person name="Hitz B.C."/>
            <person name="Karra K."/>
            <person name="Nash R.S."/>
            <person name="Weng S."/>
            <person name="Wong E.D."/>
            <person name="Lloyd P."/>
            <person name="Skrzypek M.S."/>
            <person name="Miyasato S.R."/>
            <person name="Simison M."/>
            <person name="Cherry J.M."/>
        </authorList>
    </citation>
    <scope>GENOME REANNOTATION</scope>
    <source>
        <strain>ATCC 204508 / S288c</strain>
    </source>
</reference>
<reference key="4">
    <citation type="journal article" date="1995" name="Nucleic Acids Res.">
        <title>Overexpression of DEAD box protein pMSS116 promotes ATP-dependent splicing of a yeast group II intron in vitro.</title>
        <authorList>
            <person name="Niemer I."/>
            <person name="Schmelzer C."/>
            <person name="Boerner G.V."/>
        </authorList>
    </citation>
    <scope>FUNCTION</scope>
</reference>
<reference key="5">
    <citation type="journal article" date="2002" name="Yeast">
        <title>Overexpressed yeast mitochondrial putative RNA helicase Mss116 partially restores proper mtRNA metabolism in strains lacking the Suv3 mtRNA helicase.</title>
        <authorList>
            <person name="Minczuk M."/>
            <person name="Dmochowska A."/>
            <person name="Palczewska M."/>
            <person name="Stepien P.P."/>
        </authorList>
    </citation>
    <scope>FUNCTION</scope>
</reference>
<reference key="6">
    <citation type="journal article" date="2003" name="Nature">
        <title>Global analysis of protein localization in budding yeast.</title>
        <authorList>
            <person name="Huh W.-K."/>
            <person name="Falvo J.V."/>
            <person name="Gerke L.C."/>
            <person name="Carroll A.S."/>
            <person name="Howson R.W."/>
            <person name="Weissman J.S."/>
            <person name="O'Shea E.K."/>
        </authorList>
    </citation>
    <scope>SUBCELLULAR LOCATION [LARGE SCALE ANALYSIS]</scope>
</reference>
<reference key="7">
    <citation type="journal article" date="2003" name="Nature">
        <title>Global analysis of protein expression in yeast.</title>
        <authorList>
            <person name="Ghaemmaghami S."/>
            <person name="Huh W.-K."/>
            <person name="Bower K."/>
            <person name="Howson R.W."/>
            <person name="Belle A."/>
            <person name="Dephoure N."/>
            <person name="O'Shea E.K."/>
            <person name="Weissman J.S."/>
        </authorList>
    </citation>
    <scope>LEVEL OF PROTEIN EXPRESSION [LARGE SCALE ANALYSIS]</scope>
</reference>
<reference key="8">
    <citation type="journal article" date="2003" name="Proc. Natl. Acad. Sci. U.S.A.">
        <title>The proteome of Saccharomyces cerevisiae mitochondria.</title>
        <authorList>
            <person name="Sickmann A."/>
            <person name="Reinders J."/>
            <person name="Wagner Y."/>
            <person name="Joppich C."/>
            <person name="Zahedi R.P."/>
            <person name="Meyer H.E."/>
            <person name="Schoenfisch B."/>
            <person name="Perschil I."/>
            <person name="Chacinska A."/>
            <person name="Guiard B."/>
            <person name="Rehling P."/>
            <person name="Pfanner N."/>
            <person name="Meisinger C."/>
        </authorList>
    </citation>
    <scope>SUBCELLULAR LOCATION [LARGE SCALE ANALYSIS]</scope>
    <source>
        <strain>ATCC 76625 / YPH499</strain>
    </source>
</reference>
<reference key="9">
    <citation type="journal article" date="2005" name="Proc. Natl. Acad. Sci. U.S.A.">
        <title>The splicing of yeast mitochondrial group I and group II introns requires a DEAD-box protein with RNA chaperone function.</title>
        <authorList>
            <person name="Huang H.-R."/>
            <person name="Rowe C.E."/>
            <person name="Mohr S."/>
            <person name="Jiang Y."/>
            <person name="Lambowitz A.M."/>
            <person name="Perlman P.S."/>
        </authorList>
    </citation>
    <scope>FUNCTION</scope>
</reference>
<sequence>MLTSILIKGRTPVLASRNLLAALSNCNHITWAVSRRLYNDGNRDQRNFGRNQRNNNSNRYRNSRFNSRPRTRSREDDDEVHFDKTTFSKLIHVPKEDNSKEVTLDSLLEEGVLDKEIHKAITRMEFPGLTPVQQKTIKPILSSEDHDVIARAKTGTGKTFAFLIPIFQHLINTKFDSQYMVKAVIVAPTRDLALQIEAEVKKIHDMNYGLKKYACVSLVGGTDFRAAMNKMNKLRPNIVIATPGRLIDVLEKYSNKFFRFVDYKVLDEADRLLEIGFRDDLETISGILNEKNSKSADNIKTLLFSATLDDKVQKLANNIMNKKECLFLDTVDKNEPEAHERIDQSVVISEKFANSIFAAVEHIKKQIKERDSNYKAIIFAPTVKFTSFLCSILKNEFKKDLPILEFHGKITQNKRTSLVKRFKKDESGILVCTDVGARGMDFPNVHEVLQIGVPSELANYIHRIGRTARSGKEGSSVLFICKDELPFVRELEDAKNIVIAKQEKYEPSEEIKSEVLEAVTEEPEDISDIVISLISSYRSCIKEYRFSERRILPEIASTYGVLLNDPQLKIPVSRRFLDKLGLSRSPIGKAMFEIRDYSSRDGNNKSYDYDDDSEISFRGNKNYNNRSQNRDYDDEPFRRSNNNRRSFSRSNDKNNYSSRNSNIY</sequence>
<keyword id="KW-0002">3D-structure</keyword>
<keyword id="KW-0067">ATP-binding</keyword>
<keyword id="KW-0347">Helicase</keyword>
<keyword id="KW-0378">Hydrolase</keyword>
<keyword id="KW-0496">Mitochondrion</keyword>
<keyword id="KW-0507">mRNA processing</keyword>
<keyword id="KW-0508">mRNA splicing</keyword>
<keyword id="KW-0547">Nucleotide-binding</keyword>
<keyword id="KW-1185">Reference proteome</keyword>
<keyword id="KW-0694">RNA-binding</keyword>
<keyword id="KW-0809">Transit peptide</keyword>
<keyword id="KW-0810">Translation regulation</keyword>
<organism>
    <name type="scientific">Saccharomyces cerevisiae (strain ATCC 204508 / S288c)</name>
    <name type="common">Baker's yeast</name>
    <dbReference type="NCBI Taxonomy" id="559292"/>
    <lineage>
        <taxon>Eukaryota</taxon>
        <taxon>Fungi</taxon>
        <taxon>Dikarya</taxon>
        <taxon>Ascomycota</taxon>
        <taxon>Saccharomycotina</taxon>
        <taxon>Saccharomycetes</taxon>
        <taxon>Saccharomycetales</taxon>
        <taxon>Saccharomycetaceae</taxon>
        <taxon>Saccharomyces</taxon>
    </lineage>
</organism>
<name>MS116_YEAST</name>
<protein>
    <recommendedName>
        <fullName>ATP-dependent RNA helicase MSS116, mitochondrial</fullName>
        <ecNumber>3.6.4.13</ecNumber>
    </recommendedName>
</protein>
<proteinExistence type="evidence at protein level"/>
<gene>
    <name type="primary">MSS116</name>
    <name type="ordered locus">YDR194C</name>
    <name type="ORF">YD9346.05C</name>
</gene>
<accession>P15424</accession>
<accession>D6VSH6</accession>
<comment type="function">
    <text evidence="5 9 10 11">ATP-dependent RNA helicase required for mitochondrial splicing of group I and II introns. Specifically involved in the ATP-dependent splicing of the bl1 intron of COB. Also required for efficient mitochondrial translation.</text>
</comment>
<comment type="catalytic activity">
    <reaction>
        <text>ATP + H2O = ADP + phosphate + H(+)</text>
        <dbReference type="Rhea" id="RHEA:13065"/>
        <dbReference type="ChEBI" id="CHEBI:15377"/>
        <dbReference type="ChEBI" id="CHEBI:15378"/>
        <dbReference type="ChEBI" id="CHEBI:30616"/>
        <dbReference type="ChEBI" id="CHEBI:43474"/>
        <dbReference type="ChEBI" id="CHEBI:456216"/>
        <dbReference type="EC" id="3.6.4.13"/>
    </reaction>
</comment>
<comment type="subcellular location">
    <subcellularLocation>
        <location evidence="6 8">Mitochondrion matrix</location>
    </subcellularLocation>
</comment>
<comment type="domain">
    <text>The Q motif is unique to and characteristic of the DEAD box family of RNA helicases and controls ATP binding and hydrolysis.</text>
</comment>
<comment type="miscellaneous">
    <text evidence="7">Present with 10300 molecules/cell in log phase SD medium.</text>
</comment>
<comment type="similarity">
    <text evidence="12">Belongs to the DEAD box helicase family. DDX18/HAS1 subfamily.</text>
</comment>